<feature type="chain" id="PRO_0000287090" description="Protein DDI1 homolog 2">
    <location>
        <begin position="1"/>
        <end position="399"/>
    </location>
</feature>
<feature type="domain" description="Ubiquitin-like" evidence="1">
    <location>
        <begin position="1"/>
        <end position="81"/>
    </location>
</feature>
<feature type="region of interest" description="Disordered" evidence="2">
    <location>
        <begin position="99"/>
        <end position="134"/>
    </location>
</feature>
<feature type="short sequence motif" description="Ubiquitin-binding" evidence="9">
    <location>
        <begin position="376"/>
        <end position="395"/>
    </location>
</feature>
<feature type="compositionally biased region" description="Polar residues" evidence="2">
    <location>
        <begin position="103"/>
        <end position="131"/>
    </location>
</feature>
<feature type="active site" evidence="10">
    <location>
        <position position="252"/>
    </location>
</feature>
<feature type="modified residue" description="Phosphothreonine" evidence="21">
    <location>
        <position position="104"/>
    </location>
</feature>
<feature type="modified residue" description="Phosphoserine" evidence="17 18 19 21">
    <location>
        <position position="106"/>
    </location>
</feature>
<feature type="modified residue" description="Phosphoserine" evidence="21">
    <location>
        <position position="121"/>
    </location>
</feature>
<feature type="modified residue" description="Phosphoserine" evidence="18">
    <location>
        <position position="128"/>
    </location>
</feature>
<feature type="modified residue" description="Phosphoserine" evidence="21">
    <location>
        <position position="150"/>
    </location>
</feature>
<feature type="modified residue" description="Phosphoserine" evidence="16 18 19 20 21">
    <location>
        <position position="194"/>
    </location>
</feature>
<feature type="splice variant" id="VSP_025297" description="In isoform 2." evidence="7">
    <location>
        <begin position="212"/>
        <end position="399"/>
    </location>
</feature>
<feature type="splice variant" id="VSP_025298" description="In isoform 3." evidence="8">
    <original>ERQKP</original>
    <variation>GIWDGQTLQYLLLMGKPGKCGLQKG</variation>
    <location>
        <begin position="395"/>
        <end position="399"/>
    </location>
</feature>
<feature type="mutagenesis site" description="Abolishes aspartic protease activity." evidence="4">
    <original>D</original>
    <variation>N</variation>
    <location>
        <position position="252"/>
    </location>
</feature>
<feature type="strand" evidence="22">
    <location>
        <begin position="1"/>
        <end position="9"/>
    </location>
</feature>
<feature type="strand" evidence="22">
    <location>
        <begin position="15"/>
        <end position="21"/>
    </location>
</feature>
<feature type="helix" evidence="22">
    <location>
        <begin position="27"/>
        <end position="38"/>
    </location>
</feature>
<feature type="helix" evidence="22">
    <location>
        <begin position="42"/>
        <end position="44"/>
    </location>
</feature>
<feature type="strand" evidence="22">
    <location>
        <begin position="46"/>
        <end position="49"/>
    </location>
</feature>
<feature type="helix" evidence="22">
    <location>
        <begin position="61"/>
        <end position="63"/>
    </location>
</feature>
<feature type="strand" evidence="22">
    <location>
        <begin position="71"/>
        <end position="76"/>
    </location>
</feature>
<feature type="turn" evidence="24">
    <location>
        <begin position="129"/>
        <end position="131"/>
    </location>
</feature>
<feature type="helix" evidence="24">
    <location>
        <begin position="135"/>
        <end position="144"/>
    </location>
</feature>
<feature type="helix" evidence="24">
    <location>
        <begin position="146"/>
        <end position="155"/>
    </location>
</feature>
<feature type="helix" evidence="24">
    <location>
        <begin position="157"/>
        <end position="164"/>
    </location>
</feature>
<feature type="helix" evidence="24">
    <location>
        <begin position="168"/>
        <end position="190"/>
    </location>
</feature>
<feature type="strand" evidence="23">
    <location>
        <begin position="237"/>
        <end position="242"/>
    </location>
</feature>
<feature type="strand" evidence="23">
    <location>
        <begin position="245"/>
        <end position="252"/>
    </location>
</feature>
<feature type="strand" evidence="23">
    <location>
        <begin position="259"/>
        <end position="261"/>
    </location>
</feature>
<feature type="helix" evidence="23">
    <location>
        <begin position="262"/>
        <end position="267"/>
    </location>
</feature>
<feature type="helix" evidence="23">
    <location>
        <begin position="271"/>
        <end position="273"/>
    </location>
</feature>
<feature type="helix" evidence="23">
    <location>
        <begin position="276"/>
        <end position="278"/>
    </location>
</feature>
<feature type="strand" evidence="23">
    <location>
        <begin position="290"/>
        <end position="301"/>
    </location>
</feature>
<feature type="strand" evidence="23">
    <location>
        <begin position="304"/>
        <end position="314"/>
    </location>
</feature>
<feature type="strand" evidence="23">
    <location>
        <begin position="317"/>
        <end position="323"/>
    </location>
</feature>
<feature type="helix" evidence="23">
    <location>
        <begin position="324"/>
        <end position="329"/>
    </location>
</feature>
<feature type="strand" evidence="23">
    <location>
        <begin position="333"/>
        <end position="335"/>
    </location>
</feature>
<feature type="turn" evidence="23">
    <location>
        <begin position="336"/>
        <end position="339"/>
    </location>
</feature>
<feature type="strand" evidence="23">
    <location>
        <begin position="340"/>
        <end position="342"/>
    </location>
</feature>
<feature type="turn" evidence="23">
    <location>
        <begin position="344"/>
        <end position="346"/>
    </location>
</feature>
<feature type="strand" evidence="23">
    <location>
        <begin position="349"/>
        <end position="351"/>
    </location>
</feature>
<feature type="helix" evidence="23">
    <location>
        <begin position="355"/>
        <end position="357"/>
    </location>
</feature>
<gene>
    <name evidence="12" type="primary">DDI2</name>
</gene>
<dbReference type="EC" id="3.4.23.-" evidence="4"/>
<dbReference type="EMBL" id="AK293006">
    <property type="protein sequence ID" value="BAF85695.1"/>
    <property type="molecule type" value="mRNA"/>
</dbReference>
<dbReference type="EMBL" id="AL121992">
    <property type="status" value="NOT_ANNOTATED_CDS"/>
    <property type="molecule type" value="Genomic_DNA"/>
</dbReference>
<dbReference type="EMBL" id="CH471167">
    <property type="protein sequence ID" value="EAW51743.1"/>
    <property type="molecule type" value="Genomic_DNA"/>
</dbReference>
<dbReference type="EMBL" id="BC006011">
    <property type="protein sequence ID" value="AAH06011.1"/>
    <property type="molecule type" value="mRNA"/>
</dbReference>
<dbReference type="EMBL" id="BN000122">
    <property type="protein sequence ID" value="CAD67552.1"/>
    <property type="molecule type" value="mRNA"/>
</dbReference>
<dbReference type="CCDS" id="CCDS30607.1">
    <molecule id="Q5TDH0-1"/>
</dbReference>
<dbReference type="RefSeq" id="NP_115717.3">
    <molecule id="Q5TDH0-1"/>
    <property type="nucleotide sequence ID" value="NM_032341.4"/>
</dbReference>
<dbReference type="PDB" id="2N7D">
    <property type="method" value="NMR"/>
    <property type="chains" value="A=1-76"/>
</dbReference>
<dbReference type="PDB" id="4RGH">
    <property type="method" value="X-ray"/>
    <property type="resolution" value="1.90 A"/>
    <property type="chains" value="A/B=212-360"/>
</dbReference>
<dbReference type="PDB" id="5K57">
    <property type="method" value="NMR"/>
    <property type="chains" value="A=116-212"/>
</dbReference>
<dbReference type="PDBsum" id="2N7D"/>
<dbReference type="PDBsum" id="4RGH"/>
<dbReference type="PDBsum" id="5K57"/>
<dbReference type="SMR" id="Q5TDH0"/>
<dbReference type="BioGRID" id="124027">
    <property type="interactions" value="128"/>
</dbReference>
<dbReference type="FunCoup" id="Q5TDH0">
    <property type="interactions" value="2163"/>
</dbReference>
<dbReference type="IntAct" id="Q5TDH0">
    <property type="interactions" value="47"/>
</dbReference>
<dbReference type="STRING" id="9606.ENSP00000417748"/>
<dbReference type="MEROPS" id="A28.003"/>
<dbReference type="GlyGen" id="Q5TDH0">
    <property type="glycosylation" value="1 site, 1 O-linked glycan (1 site)"/>
</dbReference>
<dbReference type="iPTMnet" id="Q5TDH0"/>
<dbReference type="PhosphoSitePlus" id="Q5TDH0"/>
<dbReference type="BioMuta" id="DDI2"/>
<dbReference type="DMDM" id="74746201"/>
<dbReference type="jPOST" id="Q5TDH0"/>
<dbReference type="MassIVE" id="Q5TDH0"/>
<dbReference type="PaxDb" id="9606-ENSP00000417748"/>
<dbReference type="PeptideAtlas" id="Q5TDH0"/>
<dbReference type="ProteomicsDB" id="65023">
    <molecule id="Q5TDH0-1"/>
</dbReference>
<dbReference type="ProteomicsDB" id="65024">
    <molecule id="Q5TDH0-2"/>
</dbReference>
<dbReference type="ProteomicsDB" id="65025">
    <molecule id="Q5TDH0-3"/>
</dbReference>
<dbReference type="Pumba" id="Q5TDH0"/>
<dbReference type="Antibodypedia" id="52916">
    <property type="antibodies" value="105 antibodies from 16 providers"/>
</dbReference>
<dbReference type="DNASU" id="84301"/>
<dbReference type="Ensembl" id="ENST00000480945.6">
    <molecule id="Q5TDH0-1"/>
    <property type="protein sequence ID" value="ENSP00000417748.1"/>
    <property type="gene ID" value="ENSG00000197312.13"/>
</dbReference>
<dbReference type="GeneID" id="84301"/>
<dbReference type="KEGG" id="hsa:84301"/>
<dbReference type="MANE-Select" id="ENST00000480945.6">
    <property type="protein sequence ID" value="ENSP00000417748.1"/>
    <property type="RefSeq nucleotide sequence ID" value="NM_032341.5"/>
    <property type="RefSeq protein sequence ID" value="NP_115717.3"/>
</dbReference>
<dbReference type="UCSC" id="uc001awz.4">
    <molecule id="Q5TDH0-1"/>
    <property type="organism name" value="human"/>
</dbReference>
<dbReference type="AGR" id="HGNC:24578"/>
<dbReference type="CTD" id="84301"/>
<dbReference type="DisGeNET" id="84301"/>
<dbReference type="GeneCards" id="DDI2"/>
<dbReference type="HGNC" id="HGNC:24578">
    <property type="gene designation" value="DDI2"/>
</dbReference>
<dbReference type="HPA" id="ENSG00000197312">
    <property type="expression patterns" value="Low tissue specificity"/>
</dbReference>
<dbReference type="MIM" id="620871">
    <property type="type" value="gene"/>
</dbReference>
<dbReference type="neXtProt" id="NX_Q5TDH0"/>
<dbReference type="OpenTargets" id="ENSG00000197312"/>
<dbReference type="PharmGKB" id="PA142672004"/>
<dbReference type="VEuPathDB" id="HostDB:ENSG00000197312"/>
<dbReference type="eggNOG" id="KOG0012">
    <property type="taxonomic scope" value="Eukaryota"/>
</dbReference>
<dbReference type="GeneTree" id="ENSGT00950000182999"/>
<dbReference type="HOGENOM" id="CLU_020435_1_0_1"/>
<dbReference type="InParanoid" id="Q5TDH0"/>
<dbReference type="OMA" id="GHRLNAF"/>
<dbReference type="OrthoDB" id="1047367at2759"/>
<dbReference type="PAN-GO" id="Q5TDH0">
    <property type="GO annotations" value="0 GO annotations based on evolutionary models"/>
</dbReference>
<dbReference type="PhylomeDB" id="Q5TDH0"/>
<dbReference type="TreeFam" id="TF333421"/>
<dbReference type="PathwayCommons" id="Q5TDH0"/>
<dbReference type="SignaLink" id="Q5TDH0"/>
<dbReference type="BioGRID-ORCS" id="84301">
    <property type="hits" value="158 hits in 1158 CRISPR screens"/>
</dbReference>
<dbReference type="ChiTaRS" id="DDI2">
    <property type="organism name" value="human"/>
</dbReference>
<dbReference type="EvolutionaryTrace" id="Q5TDH0"/>
<dbReference type="GenomeRNAi" id="84301"/>
<dbReference type="Pharos" id="Q5TDH0">
    <property type="development level" value="Tbio"/>
</dbReference>
<dbReference type="PRO" id="PR:Q5TDH0"/>
<dbReference type="Proteomes" id="UP000005640">
    <property type="component" value="Chromosome 1"/>
</dbReference>
<dbReference type="RNAct" id="Q5TDH0">
    <property type="molecule type" value="protein"/>
</dbReference>
<dbReference type="Bgee" id="ENSG00000197312">
    <property type="expression patterns" value="Expressed in tibialis anterior and 188 other cell types or tissues"/>
</dbReference>
<dbReference type="ExpressionAtlas" id="Q5TDH0">
    <property type="expression patterns" value="baseline and differential"/>
</dbReference>
<dbReference type="GO" id="GO:0005694">
    <property type="term" value="C:chromosome"/>
    <property type="evidence" value="ECO:0007669"/>
    <property type="project" value="UniProtKB-SubCell"/>
</dbReference>
<dbReference type="GO" id="GO:0005829">
    <property type="term" value="C:cytosol"/>
    <property type="evidence" value="ECO:0000314"/>
    <property type="project" value="HPA"/>
</dbReference>
<dbReference type="GO" id="GO:0005654">
    <property type="term" value="C:nucleoplasm"/>
    <property type="evidence" value="ECO:0000314"/>
    <property type="project" value="HPA"/>
</dbReference>
<dbReference type="GO" id="GO:0004190">
    <property type="term" value="F:aspartic-type endopeptidase activity"/>
    <property type="evidence" value="ECO:0000314"/>
    <property type="project" value="UniProtKB"/>
</dbReference>
<dbReference type="GO" id="GO:0042802">
    <property type="term" value="F:identical protein binding"/>
    <property type="evidence" value="ECO:0000314"/>
    <property type="project" value="UniProtKB"/>
</dbReference>
<dbReference type="GO" id="GO:0043130">
    <property type="term" value="F:ubiquitin binding"/>
    <property type="evidence" value="ECO:0000314"/>
    <property type="project" value="UniProtKB"/>
</dbReference>
<dbReference type="GO" id="GO:0072711">
    <property type="term" value="P:cellular response to hydroxyurea"/>
    <property type="evidence" value="ECO:0000315"/>
    <property type="project" value="UniProtKB"/>
</dbReference>
<dbReference type="GO" id="GO:0010498">
    <property type="term" value="P:proteasomal protein catabolic process"/>
    <property type="evidence" value="ECO:0000315"/>
    <property type="project" value="UniProtKB"/>
</dbReference>
<dbReference type="GO" id="GO:0016485">
    <property type="term" value="P:protein processing"/>
    <property type="evidence" value="ECO:0000314"/>
    <property type="project" value="UniProtKB"/>
</dbReference>
<dbReference type="GO" id="GO:0097752">
    <property type="term" value="P:regulation of DNA stability"/>
    <property type="evidence" value="ECO:0000315"/>
    <property type="project" value="UniProtKB"/>
</dbReference>
<dbReference type="GO" id="GO:0031647">
    <property type="term" value="P:regulation of protein stability"/>
    <property type="evidence" value="ECO:0000315"/>
    <property type="project" value="UniProtKB"/>
</dbReference>
<dbReference type="CDD" id="cd05479">
    <property type="entry name" value="RP_DDI"/>
    <property type="match status" value="1"/>
</dbReference>
<dbReference type="CDD" id="cd01796">
    <property type="entry name" value="Ubl_Ddi1_like"/>
    <property type="match status" value="1"/>
</dbReference>
<dbReference type="FunFam" id="2.40.70.10:FF:000005">
    <property type="entry name" value="DNA damage inducible 1 homolog 2"/>
    <property type="match status" value="1"/>
</dbReference>
<dbReference type="FunFam" id="3.10.20.90:FF:000107">
    <property type="entry name" value="protein DDI1 homolog 2 isoform X1"/>
    <property type="match status" value="1"/>
</dbReference>
<dbReference type="Gene3D" id="2.40.70.10">
    <property type="entry name" value="Acid Proteases"/>
    <property type="match status" value="1"/>
</dbReference>
<dbReference type="Gene3D" id="3.10.20.90">
    <property type="entry name" value="Phosphatidylinositol 3-kinase Catalytic Subunit, Chain A, domain 1"/>
    <property type="match status" value="1"/>
</dbReference>
<dbReference type="InterPro" id="IPR033882">
    <property type="entry name" value="DDI1_N"/>
</dbReference>
<dbReference type="InterPro" id="IPR019103">
    <property type="entry name" value="Peptidase_aspartic_DDI1-type"/>
</dbReference>
<dbReference type="InterPro" id="IPR021109">
    <property type="entry name" value="Peptidase_aspartic_dom_sf"/>
</dbReference>
<dbReference type="InterPro" id="IPR000626">
    <property type="entry name" value="Ubiquitin-like_dom"/>
</dbReference>
<dbReference type="InterPro" id="IPR029071">
    <property type="entry name" value="Ubiquitin-like_domsf"/>
</dbReference>
<dbReference type="PANTHER" id="PTHR15397:SF3">
    <property type="entry name" value="DNA DAMAGE INDUCIBLE 1 HOMOLOG 2"/>
    <property type="match status" value="1"/>
</dbReference>
<dbReference type="PANTHER" id="PTHR15397">
    <property type="entry name" value="SODIUM-GLUCOSE COTRANSPORTER REGULATORY PROTEIN -RELATED"/>
    <property type="match status" value="1"/>
</dbReference>
<dbReference type="Pfam" id="PF09668">
    <property type="entry name" value="Asp_protease"/>
    <property type="match status" value="1"/>
</dbReference>
<dbReference type="Pfam" id="PF24669">
    <property type="entry name" value="Ddi2_HDD"/>
    <property type="match status" value="1"/>
</dbReference>
<dbReference type="Pfam" id="PF00240">
    <property type="entry name" value="ubiquitin"/>
    <property type="match status" value="1"/>
</dbReference>
<dbReference type="SUPFAM" id="SSF50630">
    <property type="entry name" value="Acid proteases"/>
    <property type="match status" value="1"/>
</dbReference>
<dbReference type="SUPFAM" id="SSF54236">
    <property type="entry name" value="Ubiquitin-like"/>
    <property type="match status" value="1"/>
</dbReference>
<dbReference type="PROSITE" id="PS50053">
    <property type="entry name" value="UBIQUITIN_2"/>
    <property type="match status" value="1"/>
</dbReference>
<name>DDI2_HUMAN</name>
<sequence>MLLTVYCVRRDLSEVTFSLQVDADFELHNFRALCELESGIPAAESQIVYAERPLTDNHRSLASYGLKDGDVVILRQKENADPRPPVQFPNLPRIDFSSIAVPGTSSPRQRQPPGTQQSHSSPGEITSSPQGLDNPALLRDMLLANPHELSLLKERNPPLAEALLSGDLEKFSRVLVEQQQDRARREQERIRLFSADPFDLEAQAKIEEDIRQQNIEENMTIAMEEAPESFGQVVMLYINCKVNGHPVKAFVDSGAQMTIMSQACAERCNIMRLVDRRWAGIAKGVGTQKIIGRVHLAQVQIEGDFLPCSFSILEEQPMDMLLGLDMLKRHQCSIDLKKNVLVIGTTGSQTTFLPEGELPECARLAYGAGREDVRPEEIADQELAEALQKSAEDAERQKP</sequence>
<keyword id="KW-0002">3D-structure</keyword>
<keyword id="KW-0025">Alternative splicing</keyword>
<keyword id="KW-0064">Aspartyl protease</keyword>
<keyword id="KW-0158">Chromosome</keyword>
<keyword id="KW-0963">Cytoplasm</keyword>
<keyword id="KW-0378">Hydrolase</keyword>
<keyword id="KW-0597">Phosphoprotein</keyword>
<keyword id="KW-0645">Protease</keyword>
<keyword id="KW-1267">Proteomics identification</keyword>
<keyword id="KW-1185">Reference proteome</keyword>
<reference key="1">
    <citation type="journal article" date="2004" name="Nat. Genet.">
        <title>Complete sequencing and characterization of 21,243 full-length human cDNAs.</title>
        <authorList>
            <person name="Ota T."/>
            <person name="Suzuki Y."/>
            <person name="Nishikawa T."/>
            <person name="Otsuki T."/>
            <person name="Sugiyama T."/>
            <person name="Irie R."/>
            <person name="Wakamatsu A."/>
            <person name="Hayashi K."/>
            <person name="Sato H."/>
            <person name="Nagai K."/>
            <person name="Kimura K."/>
            <person name="Makita H."/>
            <person name="Sekine M."/>
            <person name="Obayashi M."/>
            <person name="Nishi T."/>
            <person name="Shibahara T."/>
            <person name="Tanaka T."/>
            <person name="Ishii S."/>
            <person name="Yamamoto J."/>
            <person name="Saito K."/>
            <person name="Kawai Y."/>
            <person name="Isono Y."/>
            <person name="Nakamura Y."/>
            <person name="Nagahari K."/>
            <person name="Murakami K."/>
            <person name="Yasuda T."/>
            <person name="Iwayanagi T."/>
            <person name="Wagatsuma M."/>
            <person name="Shiratori A."/>
            <person name="Sudo H."/>
            <person name="Hosoiri T."/>
            <person name="Kaku Y."/>
            <person name="Kodaira H."/>
            <person name="Kondo H."/>
            <person name="Sugawara M."/>
            <person name="Takahashi M."/>
            <person name="Kanda K."/>
            <person name="Yokoi T."/>
            <person name="Furuya T."/>
            <person name="Kikkawa E."/>
            <person name="Omura Y."/>
            <person name="Abe K."/>
            <person name="Kamihara K."/>
            <person name="Katsuta N."/>
            <person name="Sato K."/>
            <person name="Tanikawa M."/>
            <person name="Yamazaki M."/>
            <person name="Ninomiya K."/>
            <person name="Ishibashi T."/>
            <person name="Yamashita H."/>
            <person name="Murakawa K."/>
            <person name="Fujimori K."/>
            <person name="Tanai H."/>
            <person name="Kimata M."/>
            <person name="Watanabe M."/>
            <person name="Hiraoka S."/>
            <person name="Chiba Y."/>
            <person name="Ishida S."/>
            <person name="Ono Y."/>
            <person name="Takiguchi S."/>
            <person name="Watanabe S."/>
            <person name="Yosida M."/>
            <person name="Hotuta T."/>
            <person name="Kusano J."/>
            <person name="Kanehori K."/>
            <person name="Takahashi-Fujii A."/>
            <person name="Hara H."/>
            <person name="Tanase T.-O."/>
            <person name="Nomura Y."/>
            <person name="Togiya S."/>
            <person name="Komai F."/>
            <person name="Hara R."/>
            <person name="Takeuchi K."/>
            <person name="Arita M."/>
            <person name="Imose N."/>
            <person name="Musashino K."/>
            <person name="Yuuki H."/>
            <person name="Oshima A."/>
            <person name="Sasaki N."/>
            <person name="Aotsuka S."/>
            <person name="Yoshikawa Y."/>
            <person name="Matsunawa H."/>
            <person name="Ichihara T."/>
            <person name="Shiohata N."/>
            <person name="Sano S."/>
            <person name="Moriya S."/>
            <person name="Momiyama H."/>
            <person name="Satoh N."/>
            <person name="Takami S."/>
            <person name="Terashima Y."/>
            <person name="Suzuki O."/>
            <person name="Nakagawa S."/>
            <person name="Senoh A."/>
            <person name="Mizoguchi H."/>
            <person name="Goto Y."/>
            <person name="Shimizu F."/>
            <person name="Wakebe H."/>
            <person name="Hishigaki H."/>
            <person name="Watanabe T."/>
            <person name="Sugiyama A."/>
            <person name="Takemoto M."/>
            <person name="Kawakami B."/>
            <person name="Yamazaki M."/>
            <person name="Watanabe K."/>
            <person name="Kumagai A."/>
            <person name="Itakura S."/>
            <person name="Fukuzumi Y."/>
            <person name="Fujimori Y."/>
            <person name="Komiyama M."/>
            <person name="Tashiro H."/>
            <person name="Tanigami A."/>
            <person name="Fujiwara T."/>
            <person name="Ono T."/>
            <person name="Yamada K."/>
            <person name="Fujii Y."/>
            <person name="Ozaki K."/>
            <person name="Hirao M."/>
            <person name="Ohmori Y."/>
            <person name="Kawabata A."/>
            <person name="Hikiji T."/>
            <person name="Kobatake N."/>
            <person name="Inagaki H."/>
            <person name="Ikema Y."/>
            <person name="Okamoto S."/>
            <person name="Okitani R."/>
            <person name="Kawakami T."/>
            <person name="Noguchi S."/>
            <person name="Itoh T."/>
            <person name="Shigeta K."/>
            <person name="Senba T."/>
            <person name="Matsumura K."/>
            <person name="Nakajima Y."/>
            <person name="Mizuno T."/>
            <person name="Morinaga M."/>
            <person name="Sasaki M."/>
            <person name="Togashi T."/>
            <person name="Oyama M."/>
            <person name="Hata H."/>
            <person name="Watanabe M."/>
            <person name="Komatsu T."/>
            <person name="Mizushima-Sugano J."/>
            <person name="Satoh T."/>
            <person name="Shirai Y."/>
            <person name="Takahashi Y."/>
            <person name="Nakagawa K."/>
            <person name="Okumura K."/>
            <person name="Nagase T."/>
            <person name="Nomura N."/>
            <person name="Kikuchi H."/>
            <person name="Masuho Y."/>
            <person name="Yamashita R."/>
            <person name="Nakai K."/>
            <person name="Yada T."/>
            <person name="Nakamura Y."/>
            <person name="Ohara O."/>
            <person name="Isogai T."/>
            <person name="Sugano S."/>
        </authorList>
    </citation>
    <scope>NUCLEOTIDE SEQUENCE [LARGE SCALE MRNA] (ISOFORM 1)</scope>
    <source>
        <tissue>Trachea</tissue>
    </source>
</reference>
<reference key="2">
    <citation type="journal article" date="2006" name="Nature">
        <title>The DNA sequence and biological annotation of human chromosome 1.</title>
        <authorList>
            <person name="Gregory S.G."/>
            <person name="Barlow K.F."/>
            <person name="McLay K.E."/>
            <person name="Kaul R."/>
            <person name="Swarbreck D."/>
            <person name="Dunham A."/>
            <person name="Scott C.E."/>
            <person name="Howe K.L."/>
            <person name="Woodfine K."/>
            <person name="Spencer C.C.A."/>
            <person name="Jones M.C."/>
            <person name="Gillson C."/>
            <person name="Searle S."/>
            <person name="Zhou Y."/>
            <person name="Kokocinski F."/>
            <person name="McDonald L."/>
            <person name="Evans R."/>
            <person name="Phillips K."/>
            <person name="Atkinson A."/>
            <person name="Cooper R."/>
            <person name="Jones C."/>
            <person name="Hall R.E."/>
            <person name="Andrews T.D."/>
            <person name="Lloyd C."/>
            <person name="Ainscough R."/>
            <person name="Almeida J.P."/>
            <person name="Ambrose K.D."/>
            <person name="Anderson F."/>
            <person name="Andrew R.W."/>
            <person name="Ashwell R.I.S."/>
            <person name="Aubin K."/>
            <person name="Babbage A.K."/>
            <person name="Bagguley C.L."/>
            <person name="Bailey J."/>
            <person name="Beasley H."/>
            <person name="Bethel G."/>
            <person name="Bird C.P."/>
            <person name="Bray-Allen S."/>
            <person name="Brown J.Y."/>
            <person name="Brown A.J."/>
            <person name="Buckley D."/>
            <person name="Burton J."/>
            <person name="Bye J."/>
            <person name="Carder C."/>
            <person name="Chapman J.C."/>
            <person name="Clark S.Y."/>
            <person name="Clarke G."/>
            <person name="Clee C."/>
            <person name="Cobley V."/>
            <person name="Collier R.E."/>
            <person name="Corby N."/>
            <person name="Coville G.J."/>
            <person name="Davies J."/>
            <person name="Deadman R."/>
            <person name="Dunn M."/>
            <person name="Earthrowl M."/>
            <person name="Ellington A.G."/>
            <person name="Errington H."/>
            <person name="Frankish A."/>
            <person name="Frankland J."/>
            <person name="French L."/>
            <person name="Garner P."/>
            <person name="Garnett J."/>
            <person name="Gay L."/>
            <person name="Ghori M.R.J."/>
            <person name="Gibson R."/>
            <person name="Gilby L.M."/>
            <person name="Gillett W."/>
            <person name="Glithero R.J."/>
            <person name="Grafham D.V."/>
            <person name="Griffiths C."/>
            <person name="Griffiths-Jones S."/>
            <person name="Grocock R."/>
            <person name="Hammond S."/>
            <person name="Harrison E.S.I."/>
            <person name="Hart E."/>
            <person name="Haugen E."/>
            <person name="Heath P.D."/>
            <person name="Holmes S."/>
            <person name="Holt K."/>
            <person name="Howden P.J."/>
            <person name="Hunt A.R."/>
            <person name="Hunt S.E."/>
            <person name="Hunter G."/>
            <person name="Isherwood J."/>
            <person name="James R."/>
            <person name="Johnson C."/>
            <person name="Johnson D."/>
            <person name="Joy A."/>
            <person name="Kay M."/>
            <person name="Kershaw J.K."/>
            <person name="Kibukawa M."/>
            <person name="Kimberley A.M."/>
            <person name="King A."/>
            <person name="Knights A.J."/>
            <person name="Lad H."/>
            <person name="Laird G."/>
            <person name="Lawlor S."/>
            <person name="Leongamornlert D.A."/>
            <person name="Lloyd D.M."/>
            <person name="Loveland J."/>
            <person name="Lovell J."/>
            <person name="Lush M.J."/>
            <person name="Lyne R."/>
            <person name="Martin S."/>
            <person name="Mashreghi-Mohammadi M."/>
            <person name="Matthews L."/>
            <person name="Matthews N.S.W."/>
            <person name="McLaren S."/>
            <person name="Milne S."/>
            <person name="Mistry S."/>
            <person name="Moore M.J.F."/>
            <person name="Nickerson T."/>
            <person name="O'Dell C.N."/>
            <person name="Oliver K."/>
            <person name="Palmeiri A."/>
            <person name="Palmer S.A."/>
            <person name="Parker A."/>
            <person name="Patel D."/>
            <person name="Pearce A.V."/>
            <person name="Peck A.I."/>
            <person name="Pelan S."/>
            <person name="Phelps K."/>
            <person name="Phillimore B.J."/>
            <person name="Plumb R."/>
            <person name="Rajan J."/>
            <person name="Raymond C."/>
            <person name="Rouse G."/>
            <person name="Saenphimmachak C."/>
            <person name="Sehra H.K."/>
            <person name="Sheridan E."/>
            <person name="Shownkeen R."/>
            <person name="Sims S."/>
            <person name="Skuce C.D."/>
            <person name="Smith M."/>
            <person name="Steward C."/>
            <person name="Subramanian S."/>
            <person name="Sycamore N."/>
            <person name="Tracey A."/>
            <person name="Tromans A."/>
            <person name="Van Helmond Z."/>
            <person name="Wall M."/>
            <person name="Wallis J.M."/>
            <person name="White S."/>
            <person name="Whitehead S.L."/>
            <person name="Wilkinson J.E."/>
            <person name="Willey D.L."/>
            <person name="Williams H."/>
            <person name="Wilming L."/>
            <person name="Wray P.W."/>
            <person name="Wu Z."/>
            <person name="Coulson A."/>
            <person name="Vaudin M."/>
            <person name="Sulston J.E."/>
            <person name="Durbin R.M."/>
            <person name="Hubbard T."/>
            <person name="Wooster R."/>
            <person name="Dunham I."/>
            <person name="Carter N.P."/>
            <person name="McVean G."/>
            <person name="Ross M.T."/>
            <person name="Harrow J."/>
            <person name="Olson M.V."/>
            <person name="Beck S."/>
            <person name="Rogers J."/>
            <person name="Bentley D.R."/>
        </authorList>
    </citation>
    <scope>NUCLEOTIDE SEQUENCE [LARGE SCALE GENOMIC DNA]</scope>
</reference>
<reference key="3">
    <citation type="submission" date="2005-07" db="EMBL/GenBank/DDBJ databases">
        <authorList>
            <person name="Mural R.J."/>
            <person name="Istrail S."/>
            <person name="Sutton G.G."/>
            <person name="Florea L."/>
            <person name="Halpern A.L."/>
            <person name="Mobarry C.M."/>
            <person name="Lippert R."/>
            <person name="Walenz B."/>
            <person name="Shatkay H."/>
            <person name="Dew I."/>
            <person name="Miller J.R."/>
            <person name="Flanigan M.J."/>
            <person name="Edwards N.J."/>
            <person name="Bolanos R."/>
            <person name="Fasulo D."/>
            <person name="Halldorsson B.V."/>
            <person name="Hannenhalli S."/>
            <person name="Turner R."/>
            <person name="Yooseph S."/>
            <person name="Lu F."/>
            <person name="Nusskern D.R."/>
            <person name="Shue B.C."/>
            <person name="Zheng X.H."/>
            <person name="Zhong F."/>
            <person name="Delcher A.L."/>
            <person name="Huson D.H."/>
            <person name="Kravitz S.A."/>
            <person name="Mouchard L."/>
            <person name="Reinert K."/>
            <person name="Remington K.A."/>
            <person name="Clark A.G."/>
            <person name="Waterman M.S."/>
            <person name="Eichler E.E."/>
            <person name="Adams M.D."/>
            <person name="Hunkapiller M.W."/>
            <person name="Myers E.W."/>
            <person name="Venter J.C."/>
        </authorList>
    </citation>
    <scope>NUCLEOTIDE SEQUENCE [LARGE SCALE GENOMIC DNA]</scope>
</reference>
<reference key="4">
    <citation type="journal article" date="2004" name="Genome Res.">
        <title>The status, quality, and expansion of the NIH full-length cDNA project: the Mammalian Gene Collection (MGC).</title>
        <authorList>
            <consortium name="The MGC Project Team"/>
        </authorList>
    </citation>
    <scope>NUCLEOTIDE SEQUENCE [LARGE SCALE MRNA] (ISOFORM 2)</scope>
    <source>
        <tissue>Prostate</tissue>
    </source>
</reference>
<reference key="5">
    <citation type="journal article" date="2003" name="Nat. Rev. Genet.">
        <title>Human and mouse proteases: a comparative genomic approach.</title>
        <authorList>
            <person name="Puente X.S."/>
            <person name="Sanchez L.M."/>
            <person name="Overall C.M."/>
            <person name="Lopez-Otin C."/>
        </authorList>
    </citation>
    <scope>IDENTIFICATION</scope>
    <scope>ALTERNATIVE SPLICING (ISOFORM 3)</scope>
</reference>
<reference key="6">
    <citation type="journal article" date="2006" name="Cell">
        <title>Global, in vivo, and site-specific phosphorylation dynamics in signaling networks.</title>
        <authorList>
            <person name="Olsen J.V."/>
            <person name="Blagoev B."/>
            <person name="Gnad F."/>
            <person name="Macek B."/>
            <person name="Kumar C."/>
            <person name="Mortensen P."/>
            <person name="Mann M."/>
        </authorList>
    </citation>
    <scope>PHOSPHORYLATION [LARGE SCALE ANALYSIS] AT SER-194</scope>
    <scope>IDENTIFICATION BY MASS SPECTROMETRY [LARGE SCALE ANALYSIS]</scope>
    <source>
        <tissue>Cervix carcinoma</tissue>
    </source>
</reference>
<reference key="7">
    <citation type="journal article" date="2008" name="Proc. Natl. Acad. Sci. U.S.A.">
        <title>A quantitative atlas of mitotic phosphorylation.</title>
        <authorList>
            <person name="Dephoure N."/>
            <person name="Zhou C."/>
            <person name="Villen J."/>
            <person name="Beausoleil S.A."/>
            <person name="Bakalarski C.E."/>
            <person name="Elledge S.J."/>
            <person name="Gygi S.P."/>
        </authorList>
    </citation>
    <scope>PHOSPHORYLATION [LARGE SCALE ANALYSIS] AT SER-106</scope>
    <scope>IDENTIFICATION BY MASS SPECTROMETRY [LARGE SCALE ANALYSIS]</scope>
    <source>
        <tissue>Cervix carcinoma</tissue>
    </source>
</reference>
<reference key="8">
    <citation type="journal article" date="2009" name="Anal. Chem.">
        <title>Lys-N and trypsin cover complementary parts of the phosphoproteome in a refined SCX-based approach.</title>
        <authorList>
            <person name="Gauci S."/>
            <person name="Helbig A.O."/>
            <person name="Slijper M."/>
            <person name="Krijgsveld J."/>
            <person name="Heck A.J."/>
            <person name="Mohammed S."/>
        </authorList>
    </citation>
    <scope>IDENTIFICATION BY MASS SPECTROMETRY [LARGE SCALE ANALYSIS]</scope>
</reference>
<reference key="9">
    <citation type="journal article" date="2009" name="Sci. Signal.">
        <title>Quantitative phosphoproteomic analysis of T cell receptor signaling reveals system-wide modulation of protein-protein interactions.</title>
        <authorList>
            <person name="Mayya V."/>
            <person name="Lundgren D.H."/>
            <person name="Hwang S.-I."/>
            <person name="Rezaul K."/>
            <person name="Wu L."/>
            <person name="Eng J.K."/>
            <person name="Rodionov V."/>
            <person name="Han D.K."/>
        </authorList>
    </citation>
    <scope>PHOSPHORYLATION [LARGE SCALE ANALYSIS] AT SER-106; SER-128 AND SER-194</scope>
    <scope>IDENTIFICATION BY MASS SPECTROMETRY [LARGE SCALE ANALYSIS]</scope>
    <source>
        <tissue>Leukemic T-cell</tissue>
    </source>
</reference>
<reference key="10">
    <citation type="journal article" date="2010" name="Sci. Signal.">
        <title>Quantitative phosphoproteomics reveals widespread full phosphorylation site occupancy during mitosis.</title>
        <authorList>
            <person name="Olsen J.V."/>
            <person name="Vermeulen M."/>
            <person name="Santamaria A."/>
            <person name="Kumar C."/>
            <person name="Miller M.L."/>
            <person name="Jensen L.J."/>
            <person name="Gnad F."/>
            <person name="Cox J."/>
            <person name="Jensen T.S."/>
            <person name="Nigg E.A."/>
            <person name="Brunak S."/>
            <person name="Mann M."/>
        </authorList>
    </citation>
    <scope>PHOSPHORYLATION [LARGE SCALE ANALYSIS] AT SER-106 AND SER-194</scope>
    <scope>IDENTIFICATION BY MASS SPECTROMETRY [LARGE SCALE ANALYSIS]</scope>
    <source>
        <tissue>Cervix carcinoma</tissue>
    </source>
</reference>
<reference key="11">
    <citation type="journal article" date="2011" name="BMC Syst. Biol.">
        <title>Initial characterization of the human central proteome.</title>
        <authorList>
            <person name="Burkard T.R."/>
            <person name="Planyavsky M."/>
            <person name="Kaupe I."/>
            <person name="Breitwieser F.P."/>
            <person name="Buerckstuemmer T."/>
            <person name="Bennett K.L."/>
            <person name="Superti-Furga G."/>
            <person name="Colinge J."/>
        </authorList>
    </citation>
    <scope>IDENTIFICATION BY MASS SPECTROMETRY [LARGE SCALE ANALYSIS]</scope>
</reference>
<reference key="12">
    <citation type="journal article" date="2011" name="Sci. Signal.">
        <title>System-wide temporal characterization of the proteome and phosphoproteome of human embryonic stem cell differentiation.</title>
        <authorList>
            <person name="Rigbolt K.T."/>
            <person name="Prokhorova T.A."/>
            <person name="Akimov V."/>
            <person name="Henningsen J."/>
            <person name="Johansen P.T."/>
            <person name="Kratchmarova I."/>
            <person name="Kassem M."/>
            <person name="Mann M."/>
            <person name="Olsen J.V."/>
            <person name="Blagoev B."/>
        </authorList>
    </citation>
    <scope>PHOSPHORYLATION [LARGE SCALE ANALYSIS] AT SER-194</scope>
    <scope>IDENTIFICATION BY MASS SPECTROMETRY [LARGE SCALE ANALYSIS]</scope>
</reference>
<reference key="13">
    <citation type="journal article" date="2013" name="J. Proteome Res.">
        <title>Toward a comprehensive characterization of a human cancer cell phosphoproteome.</title>
        <authorList>
            <person name="Zhou H."/>
            <person name="Di Palma S."/>
            <person name="Preisinger C."/>
            <person name="Peng M."/>
            <person name="Polat A.N."/>
            <person name="Heck A.J."/>
            <person name="Mohammed S."/>
        </authorList>
    </citation>
    <scope>PHOSPHORYLATION [LARGE SCALE ANALYSIS] AT THR-104; SER-106; SER-121; SER-150 AND SER-194</scope>
    <scope>IDENTIFICATION BY MASS SPECTROMETRY [LARGE SCALE ANALYSIS]</scope>
    <source>
        <tissue>Cervix carcinoma</tissue>
        <tissue>Erythroleukemia</tissue>
    </source>
</reference>
<reference key="14">
    <citation type="journal article" date="2014" name="J. Proteomics">
        <title>An enzyme assisted RP-RPLC approach for in-depth analysis of human liver phosphoproteome.</title>
        <authorList>
            <person name="Bian Y."/>
            <person name="Song C."/>
            <person name="Cheng K."/>
            <person name="Dong M."/>
            <person name="Wang F."/>
            <person name="Huang J."/>
            <person name="Sun D."/>
            <person name="Wang L."/>
            <person name="Ye M."/>
            <person name="Zou H."/>
        </authorList>
    </citation>
    <scope>IDENTIFICATION BY MASS SPECTROMETRY [LARGE SCALE ANALYSIS]</scope>
    <source>
        <tissue>Liver</tissue>
    </source>
</reference>
<reference key="15">
    <citation type="journal article" date="2016" name="Curr. Biol.">
        <title>Reply to Vangala et al.: Complete inhibition of the proteasome reduces new proteasome production by causing Nrf1 aggregation.</title>
        <authorList>
            <person name="Sha Z."/>
            <person name="Goldberg A.L."/>
        </authorList>
    </citation>
    <scope>FUNCTION</scope>
    <scope>MUTAGENESIS OF ASP-252</scope>
</reference>
<reference key="16">
    <citation type="journal article" date="2016" name="Elife">
        <title>The aspartyl protease DDI2 activates Nrf1 to compensate for proteasome dysfunction.</title>
        <authorList>
            <person name="Koizumi S."/>
            <person name="Irie T."/>
            <person name="Hirayama S."/>
            <person name="Sakurai Y."/>
            <person name="Yashiroda H."/>
            <person name="Naguro I."/>
            <person name="Ichijo H."/>
            <person name="Hamazaki J."/>
            <person name="Murata S."/>
        </authorList>
    </citation>
    <scope>FUNCTION</scope>
</reference>
<reference key="17">
    <citation type="journal article" date="2018" name="Mol. Cell">
        <title>Removal of RTF2 from Stalled Replisomes Promotes Maintenance of Genome Integrity.</title>
        <authorList>
            <person name="Kottemann M.C."/>
            <person name="Conti B.A."/>
            <person name="Lach F.P."/>
            <person name="Smogorzewska A."/>
        </authorList>
    </citation>
    <scope>FUNCTION</scope>
    <scope>INTERACTION WITH MCM6; PCNA; PSMD4; PSMD8; RPA2; RPN2 AND RTF2</scope>
    <scope>SUBCELLULAR LOCATION</scope>
</reference>
<reference evidence="13 14 15" key="18">
    <citation type="journal article" date="2016" name="Sci. Rep.">
        <title>Human DNA-damage-inducible 2 protein is structurally and functionally distinct from its yeast ortholog.</title>
        <authorList>
            <person name="Siva M."/>
            <person name="Svoboda M."/>
            <person name="Veverka V."/>
            <person name="Trempe J.F."/>
            <person name="Hofmann K."/>
            <person name="Kozisek M."/>
            <person name="Hexnerova R."/>
            <person name="Sedlak F."/>
            <person name="Belza J."/>
            <person name="Brynda J."/>
            <person name="Sacha P."/>
            <person name="Hubalek M."/>
            <person name="Starkova J."/>
            <person name="Flaisigova I."/>
            <person name="Konvalinka J."/>
            <person name="Saskova K.G."/>
        </authorList>
    </citation>
    <scope>X-RAY CRYSTALLOGRAPHY (1.90 ANGSTROMS) OF 212-360</scope>
    <scope>STRUCTURE BY NMR OF 1-212</scope>
    <scope>SUBUNIT</scope>
    <scope>MOTIF</scope>
</reference>
<accession>Q5TDH0</accession>
<accession>A8KAE1</accession>
<accession>Q7RTZ0</accession>
<accession>Q9BRT1</accession>
<comment type="function">
    <text evidence="4 5 6 11">Aspartic protease that mediates the cleavage of NFE2L1/NRF1 at 'Leu-104', thereby promoting release of NFE2L1/NRF1 from the endoplasmic reticulum membrane (PubMed:27528193, PubMed:27676298). Ubiquitination of NFE2L1/NRF1 is a prerequisite for cleavage, suggesting that DDI2 specifically recognizes and binds ubiquitinated NFE2L1/NRF1 (PubMed:27528193). Seems to act as a proteasomal shuttle which links the proteasome and replication fork proteins like RTF2 (Probable). Required, with DDI1, for cellular survival following replication stress. Together or redudantly with DDI1, removes RTF2 from stalled forks to allow cell cycle progression after replication stress and maintains genome integrity (PubMed:29290612).</text>
</comment>
<comment type="subunit">
    <text evidence="3 6">Homodimer (PubMed:27461074). Interacts with MCM6; PCNA; PSMD4; PSMD8; RPA2 and RPN2 (PubMed:29290612). Interacts with RTF2 (PubMed:29290612).</text>
</comment>
<comment type="interaction">
    <interactant intactId="EBI-25858598">
        <id>Q5TDH0-2</id>
    </interactant>
    <interactant intactId="EBI-930964">
        <id>P54253</id>
        <label>ATXN1</label>
    </interactant>
    <organismsDiffer>false</organismsDiffer>
    <experiments>6</experiments>
</comment>
<comment type="interaction">
    <interactant intactId="EBI-25858598">
        <id>Q5TDH0-2</id>
    </interactant>
    <interactant intactId="EBI-744302">
        <id>P14136</id>
        <label>GFAP</label>
    </interactant>
    <organismsDiffer>false</organismsDiffer>
    <experiments>3</experiments>
</comment>
<comment type="interaction">
    <interactant intactId="EBI-25858598">
        <id>Q5TDH0-2</id>
    </interactant>
    <interactant intactId="EBI-372899">
        <id>Q13148</id>
        <label>TARDBP</label>
    </interactant>
    <organismsDiffer>false</organismsDiffer>
    <experiments>3</experiments>
</comment>
<comment type="subcellular location">
    <subcellularLocation>
        <location evidence="10">Cytoplasm</location>
        <location evidence="10">Cytosol</location>
    </subcellularLocation>
    <subcellularLocation>
        <location evidence="6">Chromosome</location>
    </subcellularLocation>
</comment>
<comment type="alternative products">
    <event type="alternative splicing"/>
    <isoform>
        <id>Q5TDH0-1</id>
        <name>1</name>
        <sequence type="displayed"/>
    </isoform>
    <isoform>
        <id>Q5TDH0-2</id>
        <name>2</name>
        <sequence type="described" ref="VSP_025297"/>
    </isoform>
    <isoform>
        <id>Q5TDH0-3</id>
        <name>3</name>
        <sequence type="described" ref="VSP_025298"/>
    </isoform>
</comment>
<comment type="similarity">
    <text evidence="8">Belongs to the DDI1 family.</text>
</comment>
<comment type="caution">
    <text evidence="3 5">The protein was initially thought to be catalytically inactive (PubMed:27461074). It was later shown that it has aspartyl protease activity and mediates cleavage of NFE2L1/NRF1 (PubMed:27676298).</text>
</comment>
<protein>
    <recommendedName>
        <fullName evidence="8">Protein DDI1 homolog 2</fullName>
        <ecNumber evidence="4">3.4.23.-</ecNumber>
    </recommendedName>
</protein>
<proteinExistence type="evidence at protein level"/>
<evidence type="ECO:0000255" key="1">
    <source>
        <dbReference type="PROSITE-ProRule" id="PRU00214"/>
    </source>
</evidence>
<evidence type="ECO:0000256" key="2">
    <source>
        <dbReference type="SAM" id="MobiDB-lite"/>
    </source>
</evidence>
<evidence type="ECO:0000269" key="3">
    <source>
    </source>
</evidence>
<evidence type="ECO:0000269" key="4">
    <source>
    </source>
</evidence>
<evidence type="ECO:0000269" key="5">
    <source>
    </source>
</evidence>
<evidence type="ECO:0000269" key="6">
    <source>
    </source>
</evidence>
<evidence type="ECO:0000303" key="7">
    <source>
    </source>
</evidence>
<evidence type="ECO:0000305" key="8"/>
<evidence type="ECO:0000305" key="9">
    <source>
    </source>
</evidence>
<evidence type="ECO:0000305" key="10">
    <source>
    </source>
</evidence>
<evidence type="ECO:0000305" key="11">
    <source>
    </source>
</evidence>
<evidence type="ECO:0000312" key="12">
    <source>
        <dbReference type="HGNC" id="HGNC:24578"/>
    </source>
</evidence>
<evidence type="ECO:0007744" key="13">
    <source>
        <dbReference type="PDB" id="2N7D"/>
    </source>
</evidence>
<evidence type="ECO:0007744" key="14">
    <source>
        <dbReference type="PDB" id="4RGH"/>
    </source>
</evidence>
<evidence type="ECO:0007744" key="15">
    <source>
        <dbReference type="PDB" id="5K57"/>
    </source>
</evidence>
<evidence type="ECO:0007744" key="16">
    <source>
    </source>
</evidence>
<evidence type="ECO:0007744" key="17">
    <source>
    </source>
</evidence>
<evidence type="ECO:0007744" key="18">
    <source>
    </source>
</evidence>
<evidence type="ECO:0007744" key="19">
    <source>
    </source>
</evidence>
<evidence type="ECO:0007744" key="20">
    <source>
    </source>
</evidence>
<evidence type="ECO:0007744" key="21">
    <source>
    </source>
</evidence>
<evidence type="ECO:0007829" key="22">
    <source>
        <dbReference type="PDB" id="2N7D"/>
    </source>
</evidence>
<evidence type="ECO:0007829" key="23">
    <source>
        <dbReference type="PDB" id="4RGH"/>
    </source>
</evidence>
<evidence type="ECO:0007829" key="24">
    <source>
        <dbReference type="PDB" id="5K57"/>
    </source>
</evidence>
<organism>
    <name type="scientific">Homo sapiens</name>
    <name type="common">Human</name>
    <dbReference type="NCBI Taxonomy" id="9606"/>
    <lineage>
        <taxon>Eukaryota</taxon>
        <taxon>Metazoa</taxon>
        <taxon>Chordata</taxon>
        <taxon>Craniata</taxon>
        <taxon>Vertebrata</taxon>
        <taxon>Euteleostomi</taxon>
        <taxon>Mammalia</taxon>
        <taxon>Eutheria</taxon>
        <taxon>Euarchontoglires</taxon>
        <taxon>Primates</taxon>
        <taxon>Haplorrhini</taxon>
        <taxon>Catarrhini</taxon>
        <taxon>Hominidae</taxon>
        <taxon>Homo</taxon>
    </lineage>
</organism>